<protein>
    <recommendedName>
        <fullName evidence="1">Uracil phosphoribosyltransferase</fullName>
        <ecNumber evidence="1">2.4.2.9</ecNumber>
    </recommendedName>
    <alternativeName>
        <fullName evidence="1">UMP pyrophosphorylase</fullName>
    </alternativeName>
    <alternativeName>
        <fullName evidence="1">UPRTase</fullName>
    </alternativeName>
</protein>
<keyword id="KW-0021">Allosteric enzyme</keyword>
<keyword id="KW-0328">Glycosyltransferase</keyword>
<keyword id="KW-0342">GTP-binding</keyword>
<keyword id="KW-0460">Magnesium</keyword>
<keyword id="KW-0547">Nucleotide-binding</keyword>
<keyword id="KW-1185">Reference proteome</keyword>
<keyword id="KW-0808">Transferase</keyword>
<accession>Q888A0</accession>
<name>UPP_PSESM</name>
<organism>
    <name type="scientific">Pseudomonas syringae pv. tomato (strain ATCC BAA-871 / DC3000)</name>
    <dbReference type="NCBI Taxonomy" id="223283"/>
    <lineage>
        <taxon>Bacteria</taxon>
        <taxon>Pseudomonadati</taxon>
        <taxon>Pseudomonadota</taxon>
        <taxon>Gammaproteobacteria</taxon>
        <taxon>Pseudomonadales</taxon>
        <taxon>Pseudomonadaceae</taxon>
        <taxon>Pseudomonas</taxon>
    </lineage>
</organism>
<comment type="function">
    <text evidence="1">Catalyzes the conversion of uracil and 5-phospho-alpha-D-ribose 1-diphosphate (PRPP) to UMP and diphosphate.</text>
</comment>
<comment type="catalytic activity">
    <reaction evidence="1">
        <text>UMP + diphosphate = 5-phospho-alpha-D-ribose 1-diphosphate + uracil</text>
        <dbReference type="Rhea" id="RHEA:13017"/>
        <dbReference type="ChEBI" id="CHEBI:17568"/>
        <dbReference type="ChEBI" id="CHEBI:33019"/>
        <dbReference type="ChEBI" id="CHEBI:57865"/>
        <dbReference type="ChEBI" id="CHEBI:58017"/>
        <dbReference type="EC" id="2.4.2.9"/>
    </reaction>
</comment>
<comment type="cofactor">
    <cofactor evidence="1">
        <name>Mg(2+)</name>
        <dbReference type="ChEBI" id="CHEBI:18420"/>
    </cofactor>
    <text evidence="1">Binds 1 Mg(2+) ion per subunit. The magnesium is bound as Mg-PRPP.</text>
</comment>
<comment type="activity regulation">
    <text evidence="1">Allosterically activated by GTP.</text>
</comment>
<comment type="pathway">
    <text evidence="1">Pyrimidine metabolism; UMP biosynthesis via salvage pathway; UMP from uracil: step 1/1.</text>
</comment>
<comment type="similarity">
    <text evidence="1">Belongs to the UPRTase family.</text>
</comment>
<feature type="chain" id="PRO_0000120871" description="Uracil phosphoribosyltransferase">
    <location>
        <begin position="1"/>
        <end position="212"/>
    </location>
</feature>
<feature type="binding site" evidence="1">
    <location>
        <position position="78"/>
    </location>
    <ligand>
        <name>5-phospho-alpha-D-ribose 1-diphosphate</name>
        <dbReference type="ChEBI" id="CHEBI:58017"/>
    </ligand>
</feature>
<feature type="binding site" evidence="1">
    <location>
        <position position="103"/>
    </location>
    <ligand>
        <name>5-phospho-alpha-D-ribose 1-diphosphate</name>
        <dbReference type="ChEBI" id="CHEBI:58017"/>
    </ligand>
</feature>
<feature type="binding site" evidence="1">
    <location>
        <begin position="130"/>
        <end position="138"/>
    </location>
    <ligand>
        <name>5-phospho-alpha-D-ribose 1-diphosphate</name>
        <dbReference type="ChEBI" id="CHEBI:58017"/>
    </ligand>
</feature>
<feature type="binding site" evidence="1">
    <location>
        <position position="193"/>
    </location>
    <ligand>
        <name>uracil</name>
        <dbReference type="ChEBI" id="CHEBI:17568"/>
    </ligand>
</feature>
<feature type="binding site" evidence="1">
    <location>
        <begin position="198"/>
        <end position="200"/>
    </location>
    <ligand>
        <name>uracil</name>
        <dbReference type="ChEBI" id="CHEBI:17568"/>
    </ligand>
</feature>
<feature type="binding site" evidence="1">
    <location>
        <position position="199"/>
    </location>
    <ligand>
        <name>5-phospho-alpha-D-ribose 1-diphosphate</name>
        <dbReference type="ChEBI" id="CHEBI:58017"/>
    </ligand>
</feature>
<gene>
    <name evidence="1" type="primary">upp</name>
    <name type="ordered locus">PSPTO_1130</name>
</gene>
<sequence>MPIREIRHPLIRHKLGLMRRADISTKNFRELAQEVGALLTYEATADLTLESYDIQGWAGTVSVEKIAGKKITVVPILRAGIGMLDGVLSLIPGAKVSAVGVARNEETLQAHTYLEKLVPEIDERLAMIIDPMLATGSSMVATIDLLKKAGCKEIRAMVLVAAPEGIAAVERAHPDVMIYTASIDERLNEHGYIIPGLGDAGDKIFGTKQKDA</sequence>
<evidence type="ECO:0000255" key="1">
    <source>
        <dbReference type="HAMAP-Rule" id="MF_01218"/>
    </source>
</evidence>
<dbReference type="EC" id="2.4.2.9" evidence="1"/>
<dbReference type="EMBL" id="AE016853">
    <property type="protein sequence ID" value="AAO54659.1"/>
    <property type="molecule type" value="Genomic_DNA"/>
</dbReference>
<dbReference type="RefSeq" id="NP_790964.1">
    <property type="nucleotide sequence ID" value="NC_004578.1"/>
</dbReference>
<dbReference type="RefSeq" id="WP_005736551.1">
    <property type="nucleotide sequence ID" value="NC_004578.1"/>
</dbReference>
<dbReference type="SMR" id="Q888A0"/>
<dbReference type="STRING" id="223283.PSPTO_1130"/>
<dbReference type="GeneID" id="61789396"/>
<dbReference type="KEGG" id="pst:PSPTO_1130"/>
<dbReference type="PATRIC" id="fig|223283.9.peg.1140"/>
<dbReference type="eggNOG" id="COG0035">
    <property type="taxonomic scope" value="Bacteria"/>
</dbReference>
<dbReference type="HOGENOM" id="CLU_067096_2_2_6"/>
<dbReference type="OrthoDB" id="9781675at2"/>
<dbReference type="PhylomeDB" id="Q888A0"/>
<dbReference type="UniPathway" id="UPA00574">
    <property type="reaction ID" value="UER00636"/>
</dbReference>
<dbReference type="Proteomes" id="UP000002515">
    <property type="component" value="Chromosome"/>
</dbReference>
<dbReference type="GO" id="GO:0005525">
    <property type="term" value="F:GTP binding"/>
    <property type="evidence" value="ECO:0007669"/>
    <property type="project" value="UniProtKB-KW"/>
</dbReference>
<dbReference type="GO" id="GO:0000287">
    <property type="term" value="F:magnesium ion binding"/>
    <property type="evidence" value="ECO:0007669"/>
    <property type="project" value="UniProtKB-UniRule"/>
</dbReference>
<dbReference type="GO" id="GO:0004845">
    <property type="term" value="F:uracil phosphoribosyltransferase activity"/>
    <property type="evidence" value="ECO:0007669"/>
    <property type="project" value="UniProtKB-UniRule"/>
</dbReference>
<dbReference type="GO" id="GO:0044206">
    <property type="term" value="P:UMP salvage"/>
    <property type="evidence" value="ECO:0007669"/>
    <property type="project" value="UniProtKB-UniRule"/>
</dbReference>
<dbReference type="GO" id="GO:0006223">
    <property type="term" value="P:uracil salvage"/>
    <property type="evidence" value="ECO:0007669"/>
    <property type="project" value="InterPro"/>
</dbReference>
<dbReference type="CDD" id="cd06223">
    <property type="entry name" value="PRTases_typeI"/>
    <property type="match status" value="1"/>
</dbReference>
<dbReference type="FunFam" id="3.40.50.2020:FF:000003">
    <property type="entry name" value="Uracil phosphoribosyltransferase"/>
    <property type="match status" value="1"/>
</dbReference>
<dbReference type="Gene3D" id="3.40.50.2020">
    <property type="match status" value="1"/>
</dbReference>
<dbReference type="HAMAP" id="MF_01218_B">
    <property type="entry name" value="Upp_B"/>
    <property type="match status" value="1"/>
</dbReference>
<dbReference type="InterPro" id="IPR000836">
    <property type="entry name" value="PRibTrfase_dom"/>
</dbReference>
<dbReference type="InterPro" id="IPR029057">
    <property type="entry name" value="PRTase-like"/>
</dbReference>
<dbReference type="InterPro" id="IPR034332">
    <property type="entry name" value="Upp_B"/>
</dbReference>
<dbReference type="InterPro" id="IPR050054">
    <property type="entry name" value="UPRTase/APRTase"/>
</dbReference>
<dbReference type="InterPro" id="IPR005765">
    <property type="entry name" value="Ura_phspho_trans"/>
</dbReference>
<dbReference type="NCBIfam" id="NF001097">
    <property type="entry name" value="PRK00129.1"/>
    <property type="match status" value="1"/>
</dbReference>
<dbReference type="NCBIfam" id="TIGR01091">
    <property type="entry name" value="upp"/>
    <property type="match status" value="1"/>
</dbReference>
<dbReference type="PANTHER" id="PTHR32315">
    <property type="entry name" value="ADENINE PHOSPHORIBOSYLTRANSFERASE"/>
    <property type="match status" value="1"/>
</dbReference>
<dbReference type="PANTHER" id="PTHR32315:SF4">
    <property type="entry name" value="URACIL PHOSPHORIBOSYLTRANSFERASE, CHLOROPLASTIC"/>
    <property type="match status" value="1"/>
</dbReference>
<dbReference type="Pfam" id="PF14681">
    <property type="entry name" value="UPRTase"/>
    <property type="match status" value="1"/>
</dbReference>
<dbReference type="SUPFAM" id="SSF53271">
    <property type="entry name" value="PRTase-like"/>
    <property type="match status" value="1"/>
</dbReference>
<reference key="1">
    <citation type="journal article" date="2003" name="Proc. Natl. Acad. Sci. U.S.A.">
        <title>The complete genome sequence of the Arabidopsis and tomato pathogen Pseudomonas syringae pv. tomato DC3000.</title>
        <authorList>
            <person name="Buell C.R."/>
            <person name="Joardar V."/>
            <person name="Lindeberg M."/>
            <person name="Selengut J."/>
            <person name="Paulsen I.T."/>
            <person name="Gwinn M.L."/>
            <person name="Dodson R.J."/>
            <person name="DeBoy R.T."/>
            <person name="Durkin A.S."/>
            <person name="Kolonay J.F."/>
            <person name="Madupu R."/>
            <person name="Daugherty S.C."/>
            <person name="Brinkac L.M."/>
            <person name="Beanan M.J."/>
            <person name="Haft D.H."/>
            <person name="Nelson W.C."/>
            <person name="Davidsen T.M."/>
            <person name="Zafar N."/>
            <person name="Zhou L."/>
            <person name="Liu J."/>
            <person name="Yuan Q."/>
            <person name="Khouri H.M."/>
            <person name="Fedorova N.B."/>
            <person name="Tran B."/>
            <person name="Russell D."/>
            <person name="Berry K.J."/>
            <person name="Utterback T.R."/>
            <person name="Van Aken S.E."/>
            <person name="Feldblyum T.V."/>
            <person name="D'Ascenzo M."/>
            <person name="Deng W.-L."/>
            <person name="Ramos A.R."/>
            <person name="Alfano J.R."/>
            <person name="Cartinhour S."/>
            <person name="Chatterjee A.K."/>
            <person name="Delaney T.P."/>
            <person name="Lazarowitz S.G."/>
            <person name="Martin G.B."/>
            <person name="Schneider D.J."/>
            <person name="Tang X."/>
            <person name="Bender C.L."/>
            <person name="White O."/>
            <person name="Fraser C.M."/>
            <person name="Collmer A."/>
        </authorList>
    </citation>
    <scope>NUCLEOTIDE SEQUENCE [LARGE SCALE GENOMIC DNA]</scope>
    <source>
        <strain>ATCC BAA-871 / DC3000</strain>
    </source>
</reference>
<proteinExistence type="inferred from homology"/>